<proteinExistence type="evidence at protein level"/>
<sequence>SGSQDLEPSSGLVTDAIADSESEDDEDLDVPIPSRFDRRVSVCAETYNPDEEEEDTDPRVIHPKTDQQRCRLQEACKDILLFKNLDQEQLSQVLDAMFERTVKVDEHVIDQRDDGDNFYVIERGTYDILVTKDNQTRSVGQYDNHGSFGELALMY</sequence>
<reference key="1">
    <citation type="journal article" date="1986" name="FEBS Lett.">
        <title>Expression cloning of a cDNA encoding the type II regulatory subunit of the cAMP-dependent protein kinase.</title>
        <authorList>
            <person name="Hemmings B.A."/>
            <person name="Schwarz M."/>
            <person name="Adavani S.R."/>
            <person name="Jans D.A."/>
        </authorList>
    </citation>
    <scope>NUCLEOTIDE SEQUENCE [MRNA]</scope>
</reference>
<reference key="2">
    <citation type="journal article" date="1979" name="J. Biol. Chem.">
        <title>Correlation of the cAMP binding domain with a site of autophosphorylation on the regulatory subunit of cAMP-dependent protein kinase II from porcine skeletal muscle.</title>
        <authorList>
            <person name="Potter R.L."/>
            <person name="Taylor S.S."/>
        </authorList>
    </citation>
    <scope>PROTEIN SEQUENCE OF 37-42</scope>
    <scope>PHOSPHORYLATION AT SER-41</scope>
    <source>
        <tissue>Skeletal muscle</tissue>
    </source>
</reference>
<protein>
    <recommendedName>
        <fullName>cAMP-dependent protein kinase type II-alpha regulatory subunit</fullName>
    </recommendedName>
</protein>
<evidence type="ECO:0000250" key="1"/>
<evidence type="ECO:0000250" key="2">
    <source>
        <dbReference type="UniProtKB" id="P13861"/>
    </source>
</evidence>
<evidence type="ECO:0000256" key="3">
    <source>
        <dbReference type="SAM" id="MobiDB-lite"/>
    </source>
</evidence>
<evidence type="ECO:0000269" key="4">
    <source>
    </source>
</evidence>
<evidence type="ECO:0000305" key="5"/>
<gene>
    <name type="primary">PRKAR2A</name>
</gene>
<comment type="function">
    <text>Regulatory subunit of the cAMP-dependent protein kinases involved in cAMP signaling in cells. Type II regulatory chains mediate membrane association by binding to anchoring proteins, including the MAP2 kinase.</text>
</comment>
<comment type="subunit">
    <text evidence="1 2">The inactive form of the enzyme is composed of two regulatory chains and two catalytic chains. Activation by cAMP produces two active catalytic monomers and a regulatory dimer that binds four cAMP molecules. Interacts with AKAP4 and CBFA2T3 (By similarity). Interacts with the phosphorylated form of PJA2 (By similarity). Interacts with MYRIP; this interaction may link PKA to components of the exocytosis machinery, thus facilitating exocytosis, including insulin release (By similarity). Forms a complex composed of PRKAR2A, GSK3B and GSKIP through GSKIP interaction; facilitates PKA-induced phosphorylation and regulates GSK3B activity (By similarity). Interacts with ADCY8; inhibits adenylate cyclase activity through PKA phosphorylation (By similarity).</text>
</comment>
<comment type="subcellular location">
    <subcellularLocation>
        <location evidence="1">Cytoplasm</location>
    </subcellularLocation>
    <subcellularLocation>
        <location evidence="1">Cell membrane</location>
    </subcellularLocation>
    <text evidence="1">Colocalizes with PJA2 in the cytoplasm and the cell membrane.</text>
</comment>
<comment type="tissue specificity">
    <text>Four types of regulatory chains are found: I-alpha, I-beta, II-alpha, and II-beta. Their expression varies among tissues and is in some cases constitutive and in others inducible.</text>
</comment>
<comment type="PTM">
    <text evidence="4">Phosphorylated by the activated catalytic chain.</text>
</comment>
<comment type="similarity">
    <text evidence="5">Belongs to the cAMP-dependent kinase regulatory chain family.</text>
</comment>
<name>KAP2_PIG</name>
<feature type="chain" id="PRO_0000205387" description="cAMP-dependent protein kinase type II-alpha regulatory subunit">
    <location>
        <begin position="1" status="less than"/>
        <end position="155" status="greater than"/>
    </location>
</feature>
<feature type="region of interest" description="Dimerization and phosphorylation">
    <location>
        <begin position="1" status="less than"/>
        <end position="81"/>
    </location>
</feature>
<feature type="region of interest" description="Disordered" evidence="3">
    <location>
        <begin position="1"/>
        <end position="34"/>
    </location>
</feature>
<feature type="compositionally biased region" description="Acidic residues" evidence="3">
    <location>
        <begin position="18"/>
        <end position="29"/>
    </location>
</feature>
<feature type="binding site">
    <location>
        <begin position="82"/>
        <end position="155" status="greater than"/>
    </location>
    <ligand>
        <name>3',5'-cyclic AMP</name>
        <dbReference type="ChEBI" id="CHEBI:58165"/>
        <label>1</label>
    </ligand>
</feature>
<feature type="binding site">
    <location>
        <position position="150"/>
    </location>
    <ligand>
        <name>3',5'-cyclic AMP</name>
        <dbReference type="ChEBI" id="CHEBI:58165"/>
        <label>1</label>
    </ligand>
</feature>
<feature type="modified residue" description="Phosphoserine" evidence="2">
    <location>
        <position position="20"/>
    </location>
</feature>
<feature type="modified residue" description="Phosphoserine" evidence="2">
    <location>
        <position position="22"/>
    </location>
</feature>
<feature type="modified residue" description="Phosphoserine; by PKA" evidence="4">
    <location>
        <position position="41"/>
    </location>
</feature>
<feature type="non-terminal residue">
    <location>
        <position position="1"/>
    </location>
</feature>
<feature type="non-terminal residue">
    <location>
        <position position="155"/>
    </location>
</feature>
<dbReference type="EMBL" id="X04709">
    <property type="protein sequence ID" value="CAA28414.1"/>
    <property type="molecule type" value="mRNA"/>
</dbReference>
<dbReference type="PIR" id="A25652">
    <property type="entry name" value="A25652"/>
</dbReference>
<dbReference type="SMR" id="P05207"/>
<dbReference type="STRING" id="9823.ENSSSCP00000042250"/>
<dbReference type="iPTMnet" id="P05207"/>
<dbReference type="PaxDb" id="9823-ENSSSCP00000012116"/>
<dbReference type="PeptideAtlas" id="P05207"/>
<dbReference type="eggNOG" id="KOG1113">
    <property type="taxonomic scope" value="Eukaryota"/>
</dbReference>
<dbReference type="InParanoid" id="P05207"/>
<dbReference type="Proteomes" id="UP000008227">
    <property type="component" value="Unplaced"/>
</dbReference>
<dbReference type="Proteomes" id="UP000314985">
    <property type="component" value="Unplaced"/>
</dbReference>
<dbReference type="Proteomes" id="UP000694570">
    <property type="component" value="Unplaced"/>
</dbReference>
<dbReference type="Proteomes" id="UP000694571">
    <property type="component" value="Unplaced"/>
</dbReference>
<dbReference type="Proteomes" id="UP000694720">
    <property type="component" value="Unplaced"/>
</dbReference>
<dbReference type="Proteomes" id="UP000694722">
    <property type="component" value="Unplaced"/>
</dbReference>
<dbReference type="Proteomes" id="UP000694723">
    <property type="component" value="Unplaced"/>
</dbReference>
<dbReference type="Proteomes" id="UP000694724">
    <property type="component" value="Unplaced"/>
</dbReference>
<dbReference type="Proteomes" id="UP000694725">
    <property type="component" value="Unplaced"/>
</dbReference>
<dbReference type="Proteomes" id="UP000694726">
    <property type="component" value="Unplaced"/>
</dbReference>
<dbReference type="Proteomes" id="UP000694727">
    <property type="component" value="Unplaced"/>
</dbReference>
<dbReference type="Proteomes" id="UP000694728">
    <property type="component" value="Unplaced"/>
</dbReference>
<dbReference type="GO" id="GO:0005952">
    <property type="term" value="C:cAMP-dependent protein kinase complex"/>
    <property type="evidence" value="ECO:0000318"/>
    <property type="project" value="GO_Central"/>
</dbReference>
<dbReference type="GO" id="GO:0005737">
    <property type="term" value="C:cytoplasm"/>
    <property type="evidence" value="ECO:0000315"/>
    <property type="project" value="AgBase"/>
</dbReference>
<dbReference type="GO" id="GO:0005829">
    <property type="term" value="C:cytosol"/>
    <property type="evidence" value="ECO:0000318"/>
    <property type="project" value="GO_Central"/>
</dbReference>
<dbReference type="GO" id="GO:0042585">
    <property type="term" value="C:germinal vesicle"/>
    <property type="evidence" value="ECO:0000315"/>
    <property type="project" value="AgBase"/>
</dbReference>
<dbReference type="GO" id="GO:0005886">
    <property type="term" value="C:plasma membrane"/>
    <property type="evidence" value="ECO:0007669"/>
    <property type="project" value="UniProtKB-SubCell"/>
</dbReference>
<dbReference type="GO" id="GO:0030552">
    <property type="term" value="F:cAMP binding"/>
    <property type="evidence" value="ECO:0000318"/>
    <property type="project" value="GO_Central"/>
</dbReference>
<dbReference type="GO" id="GO:0004862">
    <property type="term" value="F:cAMP-dependent protein kinase inhibitor activity"/>
    <property type="evidence" value="ECO:0000318"/>
    <property type="project" value="GO_Central"/>
</dbReference>
<dbReference type="GO" id="GO:0034236">
    <property type="term" value="F:protein kinase A catalytic subunit binding"/>
    <property type="evidence" value="ECO:0000318"/>
    <property type="project" value="GO_Central"/>
</dbReference>
<dbReference type="GO" id="GO:0007189">
    <property type="term" value="P:adenylate cyclase-activating G protein-coupled receptor signaling pathway"/>
    <property type="evidence" value="ECO:0000318"/>
    <property type="project" value="GO_Central"/>
</dbReference>
<dbReference type="GO" id="GO:2000480">
    <property type="term" value="P:negative regulation of cAMP-dependent protein kinase activity"/>
    <property type="evidence" value="ECO:0000315"/>
    <property type="project" value="AgBase"/>
</dbReference>
<dbReference type="GO" id="GO:1904146">
    <property type="term" value="P:positive regulation of meiotic cell cycle process involved in oocyte maturation"/>
    <property type="evidence" value="ECO:0000315"/>
    <property type="project" value="AgBase"/>
</dbReference>
<dbReference type="GO" id="GO:1903538">
    <property type="term" value="P:regulation of meiotic cell cycle process involved in oocyte maturation"/>
    <property type="evidence" value="ECO:0000315"/>
    <property type="project" value="AgBase"/>
</dbReference>
<dbReference type="CDD" id="cd00038">
    <property type="entry name" value="CAP_ED"/>
    <property type="match status" value="1"/>
</dbReference>
<dbReference type="FunFam" id="2.60.120.10:FF:000017">
    <property type="entry name" value="cAMP-dependent protein kinase type II regulatory subunit"/>
    <property type="match status" value="1"/>
</dbReference>
<dbReference type="Gene3D" id="2.60.120.10">
    <property type="entry name" value="Jelly Rolls"/>
    <property type="match status" value="1"/>
</dbReference>
<dbReference type="InterPro" id="IPR050503">
    <property type="entry name" value="cAMP-dep_PK_reg_su-like"/>
</dbReference>
<dbReference type="InterPro" id="IPR000595">
    <property type="entry name" value="cNMP-bd_dom"/>
</dbReference>
<dbReference type="InterPro" id="IPR018490">
    <property type="entry name" value="cNMP-bd_dom_sf"/>
</dbReference>
<dbReference type="InterPro" id="IPR014710">
    <property type="entry name" value="RmlC-like_jellyroll"/>
</dbReference>
<dbReference type="PANTHER" id="PTHR11635">
    <property type="entry name" value="CAMP-DEPENDENT PROTEIN KINASE REGULATORY CHAIN"/>
    <property type="match status" value="1"/>
</dbReference>
<dbReference type="PANTHER" id="PTHR11635:SF153">
    <property type="entry name" value="CAMP-DEPENDENT PROTEIN KINASE TYPE II-ALPHA REGULATORY SUBUNIT"/>
    <property type="match status" value="1"/>
</dbReference>
<dbReference type="PRINTS" id="PR00103">
    <property type="entry name" value="CAMPKINASE"/>
</dbReference>
<dbReference type="SUPFAM" id="SSF51206">
    <property type="entry name" value="cAMP-binding domain-like"/>
    <property type="match status" value="1"/>
</dbReference>
<dbReference type="PROSITE" id="PS50042">
    <property type="entry name" value="CNMP_BINDING_3"/>
    <property type="match status" value="1"/>
</dbReference>
<organism>
    <name type="scientific">Sus scrofa</name>
    <name type="common">Pig</name>
    <dbReference type="NCBI Taxonomy" id="9823"/>
    <lineage>
        <taxon>Eukaryota</taxon>
        <taxon>Metazoa</taxon>
        <taxon>Chordata</taxon>
        <taxon>Craniata</taxon>
        <taxon>Vertebrata</taxon>
        <taxon>Euteleostomi</taxon>
        <taxon>Mammalia</taxon>
        <taxon>Eutheria</taxon>
        <taxon>Laurasiatheria</taxon>
        <taxon>Artiodactyla</taxon>
        <taxon>Suina</taxon>
        <taxon>Suidae</taxon>
        <taxon>Sus</taxon>
    </lineage>
</organism>
<keyword id="KW-0114">cAMP</keyword>
<keyword id="KW-0116">cAMP-binding</keyword>
<keyword id="KW-1003">Cell membrane</keyword>
<keyword id="KW-0963">Cytoplasm</keyword>
<keyword id="KW-0903">Direct protein sequencing</keyword>
<keyword id="KW-0472">Membrane</keyword>
<keyword id="KW-0547">Nucleotide-binding</keyword>
<keyword id="KW-0597">Phosphoprotein</keyword>
<keyword id="KW-1185">Reference proteome</keyword>
<keyword id="KW-0677">Repeat</keyword>
<accession>P05207</accession>